<comment type="function">
    <text evidence="1">Plays an important role in the elongation step of protein synthesis.</text>
</comment>
<comment type="subunit">
    <text evidence="1">Heterodimer with RPLP2 at the lateral ribosomal stalk of the large ribosomal subunit.</text>
</comment>
<comment type="PTM">
    <text evidence="2">Ubiquitinated at Lys-92 and Lys-93 by RNF14 and RNF25 in response to ribosome collisions (ribosome stalling).</text>
</comment>
<comment type="similarity">
    <text evidence="4">Belongs to the eukaryotic ribosomal protein P1/P2 family.</text>
</comment>
<evidence type="ECO:0000250" key="1"/>
<evidence type="ECO:0000250" key="2">
    <source>
        <dbReference type="UniProtKB" id="P05386"/>
    </source>
</evidence>
<evidence type="ECO:0000256" key="3">
    <source>
        <dbReference type="SAM" id="MobiDB-lite"/>
    </source>
</evidence>
<evidence type="ECO:0000305" key="4"/>
<protein>
    <recommendedName>
        <fullName evidence="4">Large ribosomal subunit protein P1</fullName>
    </recommendedName>
    <alternativeName>
        <fullName>60S acidic ribosomal protein P1</fullName>
    </alternativeName>
</protein>
<keyword id="KW-0007">Acetylation</keyword>
<keyword id="KW-1017">Isopeptide bond</keyword>
<keyword id="KW-1185">Reference proteome</keyword>
<keyword id="KW-0687">Ribonucleoprotein</keyword>
<keyword id="KW-0689">Ribosomal protein</keyword>
<keyword id="KW-0832">Ubl conjugation</keyword>
<organism>
    <name type="scientific">Sus scrofa</name>
    <name type="common">Pig</name>
    <dbReference type="NCBI Taxonomy" id="9823"/>
    <lineage>
        <taxon>Eukaryota</taxon>
        <taxon>Metazoa</taxon>
        <taxon>Chordata</taxon>
        <taxon>Craniata</taxon>
        <taxon>Vertebrata</taxon>
        <taxon>Euteleostomi</taxon>
        <taxon>Mammalia</taxon>
        <taxon>Eutheria</taxon>
        <taxon>Laurasiatheria</taxon>
        <taxon>Artiodactyla</taxon>
        <taxon>Suina</taxon>
        <taxon>Suidae</taxon>
        <taxon>Sus</taxon>
    </lineage>
</organism>
<sequence length="114" mass="11748">MASVSELACIYSALILHDDEVTVPEDKINALIKAAGVNVEPFWPGFFAKALANVNIGSLICNVGAGGPPPPAGAAPPGGPAPPPPAAPAEEKKVEAKKEEFEESDDDMGFGFFD</sequence>
<reference key="1">
    <citation type="submission" date="2006-05" db="EMBL/GenBank/DDBJ databases">
        <title>Generation and analysis of cDNA sequences derived from a porcine skeletal muscle library.</title>
        <authorList>
            <person name="Cai G."/>
            <person name="Chen Y."/>
            <person name="Wang C."/>
            <person name="Li J."/>
            <person name="Peng G."/>
            <person name="Zhang H."/>
        </authorList>
    </citation>
    <scope>NUCLEOTIDE SEQUENCE [LARGE SCALE MRNA]</scope>
    <source>
        <tissue>Longissimus dorsi muscle</tissue>
    </source>
</reference>
<dbReference type="EMBL" id="DQ629169">
    <property type="protein sequence ID" value="ABK55653.1"/>
    <property type="molecule type" value="mRNA"/>
</dbReference>
<dbReference type="RefSeq" id="NP_001123436.1">
    <property type="nucleotide sequence ID" value="NM_001129964.1"/>
</dbReference>
<dbReference type="BMRB" id="A1XQU7"/>
<dbReference type="SMR" id="A1XQU7"/>
<dbReference type="FunCoup" id="A1XQU7">
    <property type="interactions" value="153"/>
</dbReference>
<dbReference type="STRING" id="9823.ENSSSCP00000005345"/>
<dbReference type="PaxDb" id="9823-ENSSSCP00000005345"/>
<dbReference type="GeneID" id="100170119"/>
<dbReference type="CTD" id="6176"/>
<dbReference type="eggNOG" id="KOG1762">
    <property type="taxonomic scope" value="Eukaryota"/>
</dbReference>
<dbReference type="InParanoid" id="A1XQU7"/>
<dbReference type="OrthoDB" id="2194681at2759"/>
<dbReference type="Proteomes" id="UP000008227">
    <property type="component" value="Unplaced"/>
</dbReference>
<dbReference type="Proteomes" id="UP000314985">
    <property type="component" value="Unplaced"/>
</dbReference>
<dbReference type="Proteomes" id="UP000694570">
    <property type="component" value="Unplaced"/>
</dbReference>
<dbReference type="Proteomes" id="UP000694571">
    <property type="component" value="Unplaced"/>
</dbReference>
<dbReference type="Proteomes" id="UP000694720">
    <property type="component" value="Unplaced"/>
</dbReference>
<dbReference type="Proteomes" id="UP000694722">
    <property type="component" value="Unplaced"/>
</dbReference>
<dbReference type="Proteomes" id="UP000694723">
    <property type="component" value="Unplaced"/>
</dbReference>
<dbReference type="Proteomes" id="UP000694724">
    <property type="component" value="Unplaced"/>
</dbReference>
<dbReference type="Proteomes" id="UP000694725">
    <property type="component" value="Unplaced"/>
</dbReference>
<dbReference type="Proteomes" id="UP000694726">
    <property type="component" value="Unplaced"/>
</dbReference>
<dbReference type="Proteomes" id="UP000694727">
    <property type="component" value="Unplaced"/>
</dbReference>
<dbReference type="Proteomes" id="UP000694728">
    <property type="component" value="Unplaced"/>
</dbReference>
<dbReference type="GO" id="GO:0022625">
    <property type="term" value="C:cytosolic large ribosomal subunit"/>
    <property type="evidence" value="ECO:0000318"/>
    <property type="project" value="GO_Central"/>
</dbReference>
<dbReference type="GO" id="GO:0030295">
    <property type="term" value="F:protein kinase activator activity"/>
    <property type="evidence" value="ECO:0000318"/>
    <property type="project" value="GO_Central"/>
</dbReference>
<dbReference type="GO" id="GO:0043021">
    <property type="term" value="F:ribonucleoprotein complex binding"/>
    <property type="evidence" value="ECO:0000318"/>
    <property type="project" value="GO_Central"/>
</dbReference>
<dbReference type="GO" id="GO:0003735">
    <property type="term" value="F:structural constituent of ribosome"/>
    <property type="evidence" value="ECO:0000318"/>
    <property type="project" value="GO_Central"/>
</dbReference>
<dbReference type="GO" id="GO:0002181">
    <property type="term" value="P:cytoplasmic translation"/>
    <property type="evidence" value="ECO:0000318"/>
    <property type="project" value="GO_Central"/>
</dbReference>
<dbReference type="GO" id="GO:0006414">
    <property type="term" value="P:translational elongation"/>
    <property type="evidence" value="ECO:0007669"/>
    <property type="project" value="InterPro"/>
</dbReference>
<dbReference type="CDD" id="cd05831">
    <property type="entry name" value="Ribosomal_P1"/>
    <property type="match status" value="1"/>
</dbReference>
<dbReference type="FunFam" id="1.10.10.1410:FF:000001">
    <property type="entry name" value="60S acidic ribosomal protein P1"/>
    <property type="match status" value="1"/>
</dbReference>
<dbReference type="Gene3D" id="1.10.10.1410">
    <property type="match status" value="1"/>
</dbReference>
<dbReference type="HAMAP" id="MF_01478">
    <property type="entry name" value="Ribosomal_L12_arch"/>
    <property type="match status" value="1"/>
</dbReference>
<dbReference type="InterPro" id="IPR038716">
    <property type="entry name" value="P1/P2_N_sf"/>
</dbReference>
<dbReference type="InterPro" id="IPR027534">
    <property type="entry name" value="Ribosomal_P1/P2"/>
</dbReference>
<dbReference type="InterPro" id="IPR001859">
    <property type="entry name" value="Ribosomal_P1/P2_euk"/>
</dbReference>
<dbReference type="PANTHER" id="PTHR45696">
    <property type="entry name" value="60S ACIDIC RIBOSOMAL PROTEIN P1"/>
    <property type="match status" value="1"/>
</dbReference>
<dbReference type="PANTHER" id="PTHR45696:SF38">
    <property type="entry name" value="LARGE RIBOSOMAL SUBUNIT PROTEIN P1"/>
    <property type="match status" value="1"/>
</dbReference>
<dbReference type="Pfam" id="PF00428">
    <property type="entry name" value="Ribosomal_60s"/>
    <property type="match status" value="1"/>
</dbReference>
<dbReference type="PRINTS" id="PR00456">
    <property type="entry name" value="RIBOSOMALP2"/>
</dbReference>
<proteinExistence type="inferred from homology"/>
<name>RLA1_PIG</name>
<feature type="initiator methionine" description="Removed" evidence="2">
    <location>
        <position position="1"/>
    </location>
</feature>
<feature type="chain" id="PRO_0000311175" description="Large ribosomal subunit protein P1">
    <location>
        <begin position="2"/>
        <end position="114"/>
    </location>
</feature>
<feature type="region of interest" description="Disordered" evidence="3">
    <location>
        <begin position="67"/>
        <end position="114"/>
    </location>
</feature>
<feature type="compositionally biased region" description="Pro residues" evidence="3">
    <location>
        <begin position="67"/>
        <end position="87"/>
    </location>
</feature>
<feature type="compositionally biased region" description="Basic and acidic residues" evidence="3">
    <location>
        <begin position="89"/>
        <end position="100"/>
    </location>
</feature>
<feature type="modified residue" description="N-acetylalanine" evidence="2">
    <location>
        <position position="2"/>
    </location>
</feature>
<feature type="cross-link" description="Glycyl lysine isopeptide (Lys-Gly) (interchain with G-Cter in ubiquitin)" evidence="2">
    <location>
        <position position="92"/>
    </location>
</feature>
<feature type="cross-link" description="Glycyl lysine isopeptide (Lys-Gly) (interchain with G-Cter in ubiquitin)" evidence="2">
    <location>
        <position position="93"/>
    </location>
</feature>
<accession>A1XQU7</accession>
<gene>
    <name type="primary">RPLP1</name>
</gene>